<accession>B2K460</accession>
<proteinExistence type="inferred from homology"/>
<feature type="chain" id="PRO_1000138750" description="Protein-methionine-sulfoxide reductase heme-binding subunit MsrQ">
    <location>
        <begin position="1"/>
        <end position="206"/>
    </location>
</feature>
<feature type="transmembrane region" description="Helical" evidence="1">
    <location>
        <begin position="13"/>
        <end position="33"/>
    </location>
</feature>
<feature type="transmembrane region" description="Helical" evidence="1">
    <location>
        <begin position="79"/>
        <end position="99"/>
    </location>
</feature>
<feature type="transmembrane region" description="Helical" evidence="1">
    <location>
        <begin position="116"/>
        <end position="136"/>
    </location>
</feature>
<feature type="transmembrane region" description="Helical" evidence="1">
    <location>
        <begin position="147"/>
        <end position="167"/>
    </location>
</feature>
<feature type="transmembrane region" description="Helical" evidence="1">
    <location>
        <begin position="169"/>
        <end position="189"/>
    </location>
</feature>
<dbReference type="EMBL" id="CP001048">
    <property type="protein sequence ID" value="ACC90709.1"/>
    <property type="molecule type" value="Genomic_DNA"/>
</dbReference>
<dbReference type="RefSeq" id="WP_002210072.1">
    <property type="nucleotide sequence ID" value="NZ_CP009780.1"/>
</dbReference>
<dbReference type="SMR" id="B2K460"/>
<dbReference type="GeneID" id="57975086"/>
<dbReference type="KEGG" id="ypb:YPTS_3756"/>
<dbReference type="PATRIC" id="fig|502801.10.peg.3214"/>
<dbReference type="GO" id="GO:0005886">
    <property type="term" value="C:plasma membrane"/>
    <property type="evidence" value="ECO:0007669"/>
    <property type="project" value="UniProtKB-SubCell"/>
</dbReference>
<dbReference type="GO" id="GO:0009055">
    <property type="term" value="F:electron transfer activity"/>
    <property type="evidence" value="ECO:0007669"/>
    <property type="project" value="UniProtKB-UniRule"/>
</dbReference>
<dbReference type="GO" id="GO:0010181">
    <property type="term" value="F:FMN binding"/>
    <property type="evidence" value="ECO:0007669"/>
    <property type="project" value="UniProtKB-UniRule"/>
</dbReference>
<dbReference type="GO" id="GO:0020037">
    <property type="term" value="F:heme binding"/>
    <property type="evidence" value="ECO:0007669"/>
    <property type="project" value="UniProtKB-UniRule"/>
</dbReference>
<dbReference type="GO" id="GO:0046872">
    <property type="term" value="F:metal ion binding"/>
    <property type="evidence" value="ECO:0007669"/>
    <property type="project" value="UniProtKB-KW"/>
</dbReference>
<dbReference type="GO" id="GO:0016679">
    <property type="term" value="F:oxidoreductase activity, acting on diphenols and related substances as donors"/>
    <property type="evidence" value="ECO:0007669"/>
    <property type="project" value="TreeGrafter"/>
</dbReference>
<dbReference type="GO" id="GO:0030091">
    <property type="term" value="P:protein repair"/>
    <property type="evidence" value="ECO:0007669"/>
    <property type="project" value="UniProtKB-UniRule"/>
</dbReference>
<dbReference type="HAMAP" id="MF_01207">
    <property type="entry name" value="MsrQ"/>
    <property type="match status" value="1"/>
</dbReference>
<dbReference type="InterPro" id="IPR013130">
    <property type="entry name" value="Fe3_Rdtase_TM_dom"/>
</dbReference>
<dbReference type="InterPro" id="IPR022837">
    <property type="entry name" value="MsrQ-like"/>
</dbReference>
<dbReference type="NCBIfam" id="NF003832">
    <property type="entry name" value="PRK05419.1-4"/>
    <property type="match status" value="1"/>
</dbReference>
<dbReference type="PANTHER" id="PTHR36964">
    <property type="entry name" value="PROTEIN-METHIONINE-SULFOXIDE REDUCTASE HEME-BINDING SUBUNIT MSRQ"/>
    <property type="match status" value="1"/>
</dbReference>
<dbReference type="PANTHER" id="PTHR36964:SF1">
    <property type="entry name" value="PROTEIN-METHIONINE-SULFOXIDE REDUCTASE HEME-BINDING SUBUNIT MSRQ"/>
    <property type="match status" value="1"/>
</dbReference>
<dbReference type="Pfam" id="PF01794">
    <property type="entry name" value="Ferric_reduct"/>
    <property type="match status" value="1"/>
</dbReference>
<reference key="1">
    <citation type="submission" date="2008-04" db="EMBL/GenBank/DDBJ databases">
        <title>Complete sequence of Yersinia pseudotuberculosis PB1/+.</title>
        <authorList>
            <person name="Copeland A."/>
            <person name="Lucas S."/>
            <person name="Lapidus A."/>
            <person name="Glavina del Rio T."/>
            <person name="Dalin E."/>
            <person name="Tice H."/>
            <person name="Bruce D."/>
            <person name="Goodwin L."/>
            <person name="Pitluck S."/>
            <person name="Munk A.C."/>
            <person name="Brettin T."/>
            <person name="Detter J.C."/>
            <person name="Han C."/>
            <person name="Tapia R."/>
            <person name="Schmutz J."/>
            <person name="Larimer F."/>
            <person name="Land M."/>
            <person name="Hauser L."/>
            <person name="Challacombe J.F."/>
            <person name="Green L."/>
            <person name="Lindler L.E."/>
            <person name="Nikolich M.P."/>
            <person name="Richardson P."/>
        </authorList>
    </citation>
    <scope>NUCLEOTIDE SEQUENCE [LARGE SCALE GENOMIC DNA]</scope>
    <source>
        <strain>PB1/+</strain>
    </source>
</reference>
<gene>
    <name evidence="1" type="primary">msrQ</name>
    <name type="ordered locus">YPTS_3756</name>
</gene>
<organism>
    <name type="scientific">Yersinia pseudotuberculosis serotype IB (strain PB1/+)</name>
    <dbReference type="NCBI Taxonomy" id="502801"/>
    <lineage>
        <taxon>Bacteria</taxon>
        <taxon>Pseudomonadati</taxon>
        <taxon>Pseudomonadota</taxon>
        <taxon>Gammaproteobacteria</taxon>
        <taxon>Enterobacterales</taxon>
        <taxon>Yersiniaceae</taxon>
        <taxon>Yersinia</taxon>
    </lineage>
</organism>
<comment type="function">
    <text evidence="1">Part of the MsrPQ system that repairs oxidized periplasmic proteins containing methionine sulfoxide residues (Met-O), using respiratory chain electrons. Thus protects these proteins from oxidative-stress damage caused by reactive species of oxygen and chlorine generated by the host defense mechanisms. MsrPQ is essential for the maintenance of envelope integrity under bleach stress, rescuing a wide series of structurally unrelated periplasmic proteins from methionine oxidation. MsrQ provides electrons for reduction to the reductase catalytic subunit MsrP, using the quinone pool of the respiratory chain.</text>
</comment>
<comment type="cofactor">
    <cofactor evidence="1">
        <name>FMN</name>
        <dbReference type="ChEBI" id="CHEBI:58210"/>
    </cofactor>
    <text evidence="1">Binds 1 FMN per subunit.</text>
</comment>
<comment type="cofactor">
    <cofactor evidence="1">
        <name>heme b</name>
        <dbReference type="ChEBI" id="CHEBI:60344"/>
    </cofactor>
    <text evidence="1">Binds 1 heme b (iron(II)-protoporphyrin IX) group per subunit.</text>
</comment>
<comment type="subunit">
    <text evidence="1">Heterodimer of a catalytic subunit (MsrP) and a heme-binding subunit (MsrQ).</text>
</comment>
<comment type="subcellular location">
    <subcellularLocation>
        <location evidence="1">Cell inner membrane</location>
        <topology evidence="1">Multi-pass membrane protein</topology>
    </subcellularLocation>
</comment>
<comment type="similarity">
    <text evidence="1">Belongs to the MsrQ family.</text>
</comment>
<name>MSRQ_YERPB</name>
<keyword id="KW-0997">Cell inner membrane</keyword>
<keyword id="KW-1003">Cell membrane</keyword>
<keyword id="KW-0249">Electron transport</keyword>
<keyword id="KW-0285">Flavoprotein</keyword>
<keyword id="KW-0288">FMN</keyword>
<keyword id="KW-0349">Heme</keyword>
<keyword id="KW-0408">Iron</keyword>
<keyword id="KW-0472">Membrane</keyword>
<keyword id="KW-0479">Metal-binding</keyword>
<keyword id="KW-0812">Transmembrane</keyword>
<keyword id="KW-1133">Transmembrane helix</keyword>
<keyword id="KW-0813">Transport</keyword>
<protein>
    <recommendedName>
        <fullName evidence="1">Protein-methionine-sulfoxide reductase heme-binding subunit MsrQ</fullName>
    </recommendedName>
    <alternativeName>
        <fullName evidence="1">Flavocytochrome MsrQ</fullName>
    </alternativeName>
</protein>
<sequence length="206" mass="23851">MRLSLRHITWLKIAIWLAATLPLLWLVLSINLGGLSADPAKDIQHFTGRMALKLLLATLLVSPLARYSKQPLLLRCRRLLGLWCFAWGTLHLLSYSILELGLSNIGLLGHELINRPYLTLGIISWLVLLALALTSTRWAQRKMGARWQKLHNWVYVVAILAPIHYLWSVKTLSPWPIIYAVMAALLLLLRYKLLLPRYKKFRQWFR</sequence>
<evidence type="ECO:0000255" key="1">
    <source>
        <dbReference type="HAMAP-Rule" id="MF_01207"/>
    </source>
</evidence>